<organism>
    <name type="scientific">Salmonella typhi</name>
    <dbReference type="NCBI Taxonomy" id="90370"/>
    <lineage>
        <taxon>Bacteria</taxon>
        <taxon>Pseudomonadati</taxon>
        <taxon>Pseudomonadota</taxon>
        <taxon>Gammaproteobacteria</taxon>
        <taxon>Enterobacterales</taxon>
        <taxon>Enterobacteriaceae</taxon>
        <taxon>Salmonella</taxon>
    </lineage>
</organism>
<accession>Q8Z229</accession>
<accession>Q7C5W6</accession>
<feature type="chain" id="PRO_0000321690" description="Rhomboid protease GlpG">
    <location>
        <begin position="1"/>
        <end position="276"/>
    </location>
</feature>
<feature type="transmembrane region" description="Helical" evidence="1">
    <location>
        <begin position="94"/>
        <end position="114"/>
    </location>
</feature>
<feature type="transmembrane region" description="Helical" evidence="1">
    <location>
        <begin position="142"/>
        <end position="162"/>
    </location>
</feature>
<feature type="transmembrane region" description="Helical" evidence="1">
    <location>
        <begin position="169"/>
        <end position="189"/>
    </location>
</feature>
<feature type="transmembrane region" description="Helical" evidence="1">
    <location>
        <begin position="192"/>
        <end position="212"/>
    </location>
</feature>
<feature type="transmembrane region" description="Helical" evidence="1">
    <location>
        <begin position="229"/>
        <end position="249"/>
    </location>
</feature>
<feature type="transmembrane region" description="Helical" evidence="1">
    <location>
        <begin position="250"/>
        <end position="270"/>
    </location>
</feature>
<feature type="active site" description="Nucleophile" evidence="1">
    <location>
        <position position="201"/>
    </location>
</feature>
<feature type="active site" evidence="1">
    <location>
        <position position="254"/>
    </location>
</feature>
<dbReference type="EC" id="3.4.21.105" evidence="1"/>
<dbReference type="EMBL" id="AE014613">
    <property type="protein sequence ID" value="AAO71459.1"/>
    <property type="molecule type" value="Genomic_DNA"/>
</dbReference>
<dbReference type="EMBL" id="AL513382">
    <property type="protein sequence ID" value="CAD08097.1"/>
    <property type="molecule type" value="Genomic_DNA"/>
</dbReference>
<dbReference type="RefSeq" id="NP_458387.1">
    <property type="nucleotide sequence ID" value="NC_003198.1"/>
</dbReference>
<dbReference type="RefSeq" id="WP_000928705.1">
    <property type="nucleotide sequence ID" value="NZ_WSUR01000001.1"/>
</dbReference>
<dbReference type="SMR" id="Q8Z229"/>
<dbReference type="STRING" id="220341.gene:17588110"/>
<dbReference type="MEROPS" id="S54.016"/>
<dbReference type="KEGG" id="stt:t3989"/>
<dbReference type="KEGG" id="sty:STY4279"/>
<dbReference type="PATRIC" id="fig|220341.7.peg.4372"/>
<dbReference type="eggNOG" id="COG0705">
    <property type="taxonomic scope" value="Bacteria"/>
</dbReference>
<dbReference type="HOGENOM" id="CLU_058989_0_0_6"/>
<dbReference type="OMA" id="LLGHCWI"/>
<dbReference type="OrthoDB" id="9778341at2"/>
<dbReference type="Proteomes" id="UP000000541">
    <property type="component" value="Chromosome"/>
</dbReference>
<dbReference type="Proteomes" id="UP000002670">
    <property type="component" value="Chromosome"/>
</dbReference>
<dbReference type="GO" id="GO:0005886">
    <property type="term" value="C:plasma membrane"/>
    <property type="evidence" value="ECO:0007669"/>
    <property type="project" value="UniProtKB-SubCell"/>
</dbReference>
<dbReference type="GO" id="GO:0004252">
    <property type="term" value="F:serine-type endopeptidase activity"/>
    <property type="evidence" value="ECO:0007669"/>
    <property type="project" value="UniProtKB-UniRule"/>
</dbReference>
<dbReference type="GO" id="GO:0006508">
    <property type="term" value="P:proteolysis"/>
    <property type="evidence" value="ECO:0007669"/>
    <property type="project" value="UniProtKB-UniRule"/>
</dbReference>
<dbReference type="FunFam" id="1.20.1540.10:FF:000003">
    <property type="entry name" value="Rhomboid protease GlpG"/>
    <property type="match status" value="1"/>
</dbReference>
<dbReference type="FunFam" id="3.30.70.2350:FF:000001">
    <property type="entry name" value="Rhomboid protease GlpG"/>
    <property type="match status" value="1"/>
</dbReference>
<dbReference type="Gene3D" id="3.30.70.2350">
    <property type="match status" value="1"/>
</dbReference>
<dbReference type="Gene3D" id="1.20.1540.10">
    <property type="entry name" value="Rhomboid-like"/>
    <property type="match status" value="1"/>
</dbReference>
<dbReference type="HAMAP" id="MF_01594">
    <property type="entry name" value="Rhomboid_GlpG"/>
    <property type="match status" value="1"/>
</dbReference>
<dbReference type="InterPro" id="IPR038236">
    <property type="entry name" value="GlpG_N_sf"/>
</dbReference>
<dbReference type="InterPro" id="IPR022732">
    <property type="entry name" value="Peptidase_S54_GlpG_N"/>
</dbReference>
<dbReference type="InterPro" id="IPR022764">
    <property type="entry name" value="Peptidase_S54_rhomboid_dom"/>
</dbReference>
<dbReference type="InterPro" id="IPR035952">
    <property type="entry name" value="Rhomboid-like_sf"/>
</dbReference>
<dbReference type="InterPro" id="IPR023662">
    <property type="entry name" value="Rhomboid_protease_GlpG"/>
</dbReference>
<dbReference type="NCBIfam" id="NF008155">
    <property type="entry name" value="PRK10907.1"/>
    <property type="match status" value="1"/>
</dbReference>
<dbReference type="NCBIfam" id="TIGR04239">
    <property type="entry name" value="rhombo_GlpG"/>
    <property type="match status" value="1"/>
</dbReference>
<dbReference type="PANTHER" id="PTHR43066:SF26">
    <property type="entry name" value="RHOMBOID PROTEASE GLPG"/>
    <property type="match status" value="1"/>
</dbReference>
<dbReference type="PANTHER" id="PTHR43066">
    <property type="entry name" value="RHOMBOID-RELATED PROTEIN"/>
    <property type="match status" value="1"/>
</dbReference>
<dbReference type="Pfam" id="PF01694">
    <property type="entry name" value="Rhomboid"/>
    <property type="match status" value="1"/>
</dbReference>
<dbReference type="Pfam" id="PF12122">
    <property type="entry name" value="Rhomboid_N"/>
    <property type="match status" value="1"/>
</dbReference>
<dbReference type="SUPFAM" id="SSF144091">
    <property type="entry name" value="Rhomboid-like"/>
    <property type="match status" value="1"/>
</dbReference>
<comment type="function">
    <text evidence="1">Rhomboid-type serine protease that catalyzes intramembrane proteolysis.</text>
</comment>
<comment type="catalytic activity">
    <reaction evidence="1">
        <text>Cleaves type-1 transmembrane domains using a catalytic dyad composed of serine and histidine that are contributed by different transmembrane domains.</text>
        <dbReference type="EC" id="3.4.21.105"/>
    </reaction>
</comment>
<comment type="subcellular location">
    <subcellularLocation>
        <location evidence="1">Cell inner membrane</location>
        <topology evidence="1">Multi-pass membrane protein</topology>
    </subcellularLocation>
</comment>
<comment type="similarity">
    <text evidence="1">Belongs to the peptidase S54 family.</text>
</comment>
<proteinExistence type="inferred from homology"/>
<keyword id="KW-0997">Cell inner membrane</keyword>
<keyword id="KW-1003">Cell membrane</keyword>
<keyword id="KW-0378">Hydrolase</keyword>
<keyword id="KW-0472">Membrane</keyword>
<keyword id="KW-0645">Protease</keyword>
<keyword id="KW-0720">Serine protease</keyword>
<keyword id="KW-0812">Transmembrane</keyword>
<keyword id="KW-1133">Transmembrane helix</keyword>
<sequence>MLMITSFANPRVAQAFVDYMATQGVILTIQQHNQSDIWLADESQAERVRVELARFIENPGDPRYLAASWQSGQTNSGLRYRRFPFLATLRERAGPVTWIVMLACVVVYIAMSLIGDQTVMVWLAWPFDPVLKFEVWRYFTHIFMHFSLMHILFNLLWWWYLGGAVEKRLGSGKLIVITVISALLSGYVQQKFSGPWFGGLSGVVYALMGYVWLRGERDPQSGIYLQRGLIIFALLWIVAGWFDWFGMSMANGAHIAGLIVGLAMAFVDTLNARKRT</sequence>
<gene>
    <name evidence="1" type="primary">glpG</name>
    <name type="ordered locus">STY4279</name>
    <name type="ordered locus">t3989</name>
</gene>
<protein>
    <recommendedName>
        <fullName evidence="1">Rhomboid protease GlpG</fullName>
        <ecNumber evidence="1">3.4.21.105</ecNumber>
    </recommendedName>
    <alternativeName>
        <fullName evidence="1">Intramembrane serine protease</fullName>
    </alternativeName>
</protein>
<name>GLPG_SALTI</name>
<evidence type="ECO:0000255" key="1">
    <source>
        <dbReference type="HAMAP-Rule" id="MF_01594"/>
    </source>
</evidence>
<reference key="1">
    <citation type="journal article" date="2001" name="Nature">
        <title>Complete genome sequence of a multiple drug resistant Salmonella enterica serovar Typhi CT18.</title>
        <authorList>
            <person name="Parkhill J."/>
            <person name="Dougan G."/>
            <person name="James K.D."/>
            <person name="Thomson N.R."/>
            <person name="Pickard D."/>
            <person name="Wain J."/>
            <person name="Churcher C.M."/>
            <person name="Mungall K.L."/>
            <person name="Bentley S.D."/>
            <person name="Holden M.T.G."/>
            <person name="Sebaihia M."/>
            <person name="Baker S."/>
            <person name="Basham D."/>
            <person name="Brooks K."/>
            <person name="Chillingworth T."/>
            <person name="Connerton P."/>
            <person name="Cronin A."/>
            <person name="Davis P."/>
            <person name="Davies R.M."/>
            <person name="Dowd L."/>
            <person name="White N."/>
            <person name="Farrar J."/>
            <person name="Feltwell T."/>
            <person name="Hamlin N."/>
            <person name="Haque A."/>
            <person name="Hien T.T."/>
            <person name="Holroyd S."/>
            <person name="Jagels K."/>
            <person name="Krogh A."/>
            <person name="Larsen T.S."/>
            <person name="Leather S."/>
            <person name="Moule S."/>
            <person name="O'Gaora P."/>
            <person name="Parry C."/>
            <person name="Quail M.A."/>
            <person name="Rutherford K.M."/>
            <person name="Simmonds M."/>
            <person name="Skelton J."/>
            <person name="Stevens K."/>
            <person name="Whitehead S."/>
            <person name="Barrell B.G."/>
        </authorList>
    </citation>
    <scope>NUCLEOTIDE SEQUENCE [LARGE SCALE GENOMIC DNA]</scope>
    <source>
        <strain>CT18</strain>
    </source>
</reference>
<reference key="2">
    <citation type="journal article" date="2003" name="J. Bacteriol.">
        <title>Comparative genomics of Salmonella enterica serovar Typhi strains Ty2 and CT18.</title>
        <authorList>
            <person name="Deng W."/>
            <person name="Liou S.-R."/>
            <person name="Plunkett G. III"/>
            <person name="Mayhew G.F."/>
            <person name="Rose D.J."/>
            <person name="Burland V."/>
            <person name="Kodoyianni V."/>
            <person name="Schwartz D.C."/>
            <person name="Blattner F.R."/>
        </authorList>
    </citation>
    <scope>NUCLEOTIDE SEQUENCE [LARGE SCALE GENOMIC DNA]</scope>
    <source>
        <strain>ATCC 700931 / Ty2</strain>
    </source>
</reference>